<comment type="function">
    <text evidence="1">Translocates 4-amino-4-deoxy-L-arabinose-phosphoundecaprenol (alpha-L-Ara4N-phosphoundecaprenol) from the cytoplasmic to the periplasmic side of the inner membrane.</text>
</comment>
<comment type="pathway">
    <text evidence="1">Bacterial outer membrane biogenesis; lipopolysaccharide biosynthesis.</text>
</comment>
<comment type="subunit">
    <text evidence="1">Heterodimer of ArnE and ArnF.</text>
</comment>
<comment type="subcellular location">
    <subcellularLocation>
        <location evidence="1">Cell inner membrane</location>
        <topology evidence="1">Multi-pass membrane protein</topology>
    </subcellularLocation>
</comment>
<comment type="similarity">
    <text evidence="1">Belongs to the ArnF family.</text>
</comment>
<comment type="sequence caution" evidence="2">
    <conflict type="erroneous initiation">
        <sequence resource="EMBL-CDS" id="ABE08008"/>
    </conflict>
</comment>
<sequence length="128" mass="14075">MGLMWGLFSVIIASAAQLSMGFAASHLPPMTHLWDFIAALLAFGLDARILLLGLLGYLLSVFCWYKTLHKLALSKAYALLSMSYVLVWIASMVLPGWEGTFSLKALLGVACIMSGLMLIFLPTTKQRY</sequence>
<protein>
    <recommendedName>
        <fullName evidence="1">Probable 4-amino-4-deoxy-L-arabinose-phosphoundecaprenol flippase subunit ArnF</fullName>
        <shortName evidence="1">L-Ara4N-phosphoundecaprenol flippase subunit ArnF</shortName>
    </recommendedName>
    <alternativeName>
        <fullName evidence="1">Undecaprenyl phosphate-aminoarabinose flippase subunit ArnF</fullName>
    </alternativeName>
</protein>
<name>ARNF_ECOUT</name>
<keyword id="KW-0997">Cell inner membrane</keyword>
<keyword id="KW-1003">Cell membrane</keyword>
<keyword id="KW-0441">Lipid A biosynthesis</keyword>
<keyword id="KW-0444">Lipid biosynthesis</keyword>
<keyword id="KW-0443">Lipid metabolism</keyword>
<keyword id="KW-0448">Lipopolysaccharide biosynthesis</keyword>
<keyword id="KW-0472">Membrane</keyword>
<keyword id="KW-0812">Transmembrane</keyword>
<keyword id="KW-1133">Transmembrane helix</keyword>
<keyword id="KW-0813">Transport</keyword>
<gene>
    <name evidence="1" type="primary">arnF</name>
    <name type="ordered locus">UTI89_C2541</name>
</gene>
<accession>Q1R9F6</accession>
<evidence type="ECO:0000255" key="1">
    <source>
        <dbReference type="HAMAP-Rule" id="MF_00538"/>
    </source>
</evidence>
<evidence type="ECO:0000305" key="2"/>
<feature type="chain" id="PRO_0000381999" description="Probable 4-amino-4-deoxy-L-arabinose-phosphoundecaprenol flippase subunit ArnF">
    <location>
        <begin position="1"/>
        <end position="128"/>
    </location>
</feature>
<feature type="topological domain" description="Cytoplasmic" evidence="1">
    <location>
        <begin position="1"/>
        <end position="2"/>
    </location>
</feature>
<feature type="transmembrane region" description="Helical" evidence="1">
    <location>
        <begin position="3"/>
        <end position="23"/>
    </location>
</feature>
<feature type="topological domain" description="Periplasmic" evidence="1">
    <location>
        <begin position="24"/>
        <end position="35"/>
    </location>
</feature>
<feature type="transmembrane region" description="Helical" evidence="1">
    <location>
        <begin position="36"/>
        <end position="56"/>
    </location>
</feature>
<feature type="topological domain" description="Cytoplasmic" evidence="1">
    <location>
        <begin position="57"/>
        <end position="76"/>
    </location>
</feature>
<feature type="transmembrane region" description="Helical" evidence="1">
    <location>
        <begin position="77"/>
        <end position="97"/>
    </location>
</feature>
<feature type="topological domain" description="Periplasmic" evidence="1">
    <location>
        <begin position="98"/>
        <end position="100"/>
    </location>
</feature>
<feature type="transmembrane region" description="Helical" evidence="1">
    <location>
        <begin position="101"/>
        <end position="121"/>
    </location>
</feature>
<feature type="topological domain" description="Cytoplasmic" evidence="1">
    <location>
        <begin position="122"/>
        <end position="128"/>
    </location>
</feature>
<proteinExistence type="inferred from homology"/>
<dbReference type="EMBL" id="CP000243">
    <property type="protein sequence ID" value="ABE08008.1"/>
    <property type="status" value="ALT_INIT"/>
    <property type="molecule type" value="Genomic_DNA"/>
</dbReference>
<dbReference type="RefSeq" id="WP_000523876.1">
    <property type="nucleotide sequence ID" value="NZ_CP064825.1"/>
</dbReference>
<dbReference type="KEGG" id="eci:UTI89_C2541"/>
<dbReference type="HOGENOM" id="CLU_1243704_0_0_6"/>
<dbReference type="UniPathway" id="UPA00030"/>
<dbReference type="Proteomes" id="UP000001952">
    <property type="component" value="Chromosome"/>
</dbReference>
<dbReference type="GO" id="GO:0005886">
    <property type="term" value="C:plasma membrane"/>
    <property type="evidence" value="ECO:0007669"/>
    <property type="project" value="UniProtKB-SubCell"/>
</dbReference>
<dbReference type="GO" id="GO:1901505">
    <property type="term" value="F:carbohydrate derivative transmembrane transporter activity"/>
    <property type="evidence" value="ECO:0007669"/>
    <property type="project" value="InterPro"/>
</dbReference>
<dbReference type="GO" id="GO:0009245">
    <property type="term" value="P:lipid A biosynthetic process"/>
    <property type="evidence" value="ECO:0007669"/>
    <property type="project" value="UniProtKB-UniRule"/>
</dbReference>
<dbReference type="GO" id="GO:0009103">
    <property type="term" value="P:lipopolysaccharide biosynthetic process"/>
    <property type="evidence" value="ECO:0007669"/>
    <property type="project" value="UniProtKB-UniRule"/>
</dbReference>
<dbReference type="FunFam" id="1.10.3730.20:FF:000003">
    <property type="entry name" value="Probable 4-amino-4-deoxy-L-arabinose-phosphoundecaprenol flippase subunit ArnF"/>
    <property type="match status" value="1"/>
</dbReference>
<dbReference type="Gene3D" id="1.10.3730.20">
    <property type="match status" value="1"/>
</dbReference>
<dbReference type="HAMAP" id="MF_00538">
    <property type="entry name" value="Flippase_ArnF"/>
    <property type="match status" value="1"/>
</dbReference>
<dbReference type="InterPro" id="IPR022832">
    <property type="entry name" value="Flippase_ArnF"/>
</dbReference>
<dbReference type="InterPro" id="IPR000390">
    <property type="entry name" value="Small_drug/metabolite_transptr"/>
</dbReference>
<dbReference type="NCBIfam" id="NF002816">
    <property type="entry name" value="PRK02971.1-2"/>
    <property type="match status" value="1"/>
</dbReference>
<dbReference type="PANTHER" id="PTHR30561:SF9">
    <property type="entry name" value="4-AMINO-4-DEOXY-L-ARABINOSE-PHOSPHOUNDECAPRENOL FLIPPASE SUBUNIT ARNF-RELATED"/>
    <property type="match status" value="1"/>
</dbReference>
<dbReference type="PANTHER" id="PTHR30561">
    <property type="entry name" value="SMR FAMILY PROTON-DEPENDENT DRUG EFFLUX TRANSPORTER SUGE"/>
    <property type="match status" value="1"/>
</dbReference>
<dbReference type="SUPFAM" id="SSF103481">
    <property type="entry name" value="Multidrug resistance efflux transporter EmrE"/>
    <property type="match status" value="1"/>
</dbReference>
<organism>
    <name type="scientific">Escherichia coli (strain UTI89 / UPEC)</name>
    <dbReference type="NCBI Taxonomy" id="364106"/>
    <lineage>
        <taxon>Bacteria</taxon>
        <taxon>Pseudomonadati</taxon>
        <taxon>Pseudomonadota</taxon>
        <taxon>Gammaproteobacteria</taxon>
        <taxon>Enterobacterales</taxon>
        <taxon>Enterobacteriaceae</taxon>
        <taxon>Escherichia</taxon>
    </lineage>
</organism>
<reference key="1">
    <citation type="journal article" date="2006" name="Proc. Natl. Acad. Sci. U.S.A.">
        <title>Identification of genes subject to positive selection in uropathogenic strains of Escherichia coli: a comparative genomics approach.</title>
        <authorList>
            <person name="Chen S.L."/>
            <person name="Hung C.-S."/>
            <person name="Xu J."/>
            <person name="Reigstad C.S."/>
            <person name="Magrini V."/>
            <person name="Sabo A."/>
            <person name="Blasiar D."/>
            <person name="Bieri T."/>
            <person name="Meyer R.R."/>
            <person name="Ozersky P."/>
            <person name="Armstrong J.R."/>
            <person name="Fulton R.S."/>
            <person name="Latreille J.P."/>
            <person name="Spieth J."/>
            <person name="Hooton T.M."/>
            <person name="Mardis E.R."/>
            <person name="Hultgren S.J."/>
            <person name="Gordon J.I."/>
        </authorList>
    </citation>
    <scope>NUCLEOTIDE SEQUENCE [LARGE SCALE GENOMIC DNA]</scope>
    <source>
        <strain>UTI89 / UPEC</strain>
    </source>
</reference>